<organism>
    <name type="scientific">Acinetobacter baylyi (strain ATCC 33305 / BD413 / ADP1)</name>
    <dbReference type="NCBI Taxonomy" id="62977"/>
    <lineage>
        <taxon>Bacteria</taxon>
        <taxon>Pseudomonadati</taxon>
        <taxon>Pseudomonadota</taxon>
        <taxon>Gammaproteobacteria</taxon>
        <taxon>Moraxellales</taxon>
        <taxon>Moraxellaceae</taxon>
        <taxon>Acinetobacter</taxon>
    </lineage>
</organism>
<gene>
    <name evidence="2" type="primary">mutM</name>
    <name evidence="2" type="synonym">fpg</name>
    <name type="ordered locus">ACIAD0707</name>
</gene>
<accession>Q6FE90</accession>
<evidence type="ECO:0000250" key="1"/>
<evidence type="ECO:0000255" key="2">
    <source>
        <dbReference type="HAMAP-Rule" id="MF_00103"/>
    </source>
</evidence>
<reference key="1">
    <citation type="journal article" date="2004" name="Nucleic Acids Res.">
        <title>Unique features revealed by the genome sequence of Acinetobacter sp. ADP1, a versatile and naturally transformation competent bacterium.</title>
        <authorList>
            <person name="Barbe V."/>
            <person name="Vallenet D."/>
            <person name="Fonknechten N."/>
            <person name="Kreimeyer A."/>
            <person name="Oztas S."/>
            <person name="Labarre L."/>
            <person name="Cruveiller S."/>
            <person name="Robert C."/>
            <person name="Duprat S."/>
            <person name="Wincker P."/>
            <person name="Ornston L.N."/>
            <person name="Weissenbach J."/>
            <person name="Marliere P."/>
            <person name="Cohen G.N."/>
            <person name="Medigue C."/>
        </authorList>
    </citation>
    <scope>NUCLEOTIDE SEQUENCE [LARGE SCALE GENOMIC DNA]</scope>
    <source>
        <strain>ATCC 33305 / BD413 / ADP1</strain>
    </source>
</reference>
<comment type="function">
    <text evidence="2">Involved in base excision repair of DNA damaged by oxidation or by mutagenic agents. Acts as a DNA glycosylase that recognizes and removes damaged bases. Has a preference for oxidized purines, such as 7,8-dihydro-8-oxoguanine (8-oxoG). Has AP (apurinic/apyrimidinic) lyase activity and introduces nicks in the DNA strand. Cleaves the DNA backbone by beta-delta elimination to generate a single-strand break at the site of the removed base with both 3'- and 5'-phosphates.</text>
</comment>
<comment type="catalytic activity">
    <reaction evidence="2">
        <text>Hydrolysis of DNA containing ring-opened 7-methylguanine residues, releasing 2,6-diamino-4-hydroxy-5-(N-methyl)formamidopyrimidine.</text>
        <dbReference type="EC" id="3.2.2.23"/>
    </reaction>
</comment>
<comment type="catalytic activity">
    <reaction evidence="2">
        <text>2'-deoxyribonucleotide-(2'-deoxyribose 5'-phosphate)-2'-deoxyribonucleotide-DNA = a 3'-end 2'-deoxyribonucleotide-(2,3-dehydro-2,3-deoxyribose 5'-phosphate)-DNA + a 5'-end 5'-phospho-2'-deoxyribonucleoside-DNA + H(+)</text>
        <dbReference type="Rhea" id="RHEA:66592"/>
        <dbReference type="Rhea" id="RHEA-COMP:13180"/>
        <dbReference type="Rhea" id="RHEA-COMP:16897"/>
        <dbReference type="Rhea" id="RHEA-COMP:17067"/>
        <dbReference type="ChEBI" id="CHEBI:15378"/>
        <dbReference type="ChEBI" id="CHEBI:136412"/>
        <dbReference type="ChEBI" id="CHEBI:157695"/>
        <dbReference type="ChEBI" id="CHEBI:167181"/>
        <dbReference type="EC" id="4.2.99.18"/>
    </reaction>
</comment>
<comment type="cofactor">
    <cofactor evidence="2">
        <name>Zn(2+)</name>
        <dbReference type="ChEBI" id="CHEBI:29105"/>
    </cofactor>
    <text evidence="2">Binds 1 zinc ion per subunit.</text>
</comment>
<comment type="subunit">
    <text evidence="2">Monomer.</text>
</comment>
<comment type="similarity">
    <text evidence="2">Belongs to the FPG family.</text>
</comment>
<name>FPG_ACIAD</name>
<protein>
    <recommendedName>
        <fullName evidence="2">Formamidopyrimidine-DNA glycosylase</fullName>
        <shortName evidence="2">Fapy-DNA glycosylase</shortName>
        <ecNumber evidence="2">3.2.2.23</ecNumber>
    </recommendedName>
    <alternativeName>
        <fullName evidence="2">DNA-(apurinic or apyrimidinic site) lyase MutM</fullName>
        <shortName evidence="2">AP lyase MutM</shortName>
        <ecNumber evidence="2">4.2.99.18</ecNumber>
    </alternativeName>
</protein>
<feature type="initiator methionine" description="Removed" evidence="1">
    <location>
        <position position="1"/>
    </location>
</feature>
<feature type="chain" id="PRO_0000228409" description="Formamidopyrimidine-DNA glycosylase">
    <location>
        <begin position="2"/>
        <end position="272"/>
    </location>
</feature>
<feature type="zinc finger region" description="FPG-type" evidence="2">
    <location>
        <begin position="234"/>
        <end position="268"/>
    </location>
</feature>
<feature type="active site" description="Schiff-base intermediate with DNA" evidence="2">
    <location>
        <position position="2"/>
    </location>
</feature>
<feature type="active site" description="Proton donor" evidence="2">
    <location>
        <position position="3"/>
    </location>
</feature>
<feature type="active site" description="Proton donor; for beta-elimination activity" evidence="2">
    <location>
        <position position="56"/>
    </location>
</feature>
<feature type="active site" description="Proton donor; for delta-elimination activity" evidence="2">
    <location>
        <position position="258"/>
    </location>
</feature>
<feature type="binding site" evidence="2">
    <location>
        <position position="89"/>
    </location>
    <ligand>
        <name>DNA</name>
        <dbReference type="ChEBI" id="CHEBI:16991"/>
    </ligand>
</feature>
<feature type="binding site" evidence="2">
    <location>
        <position position="108"/>
    </location>
    <ligand>
        <name>DNA</name>
        <dbReference type="ChEBI" id="CHEBI:16991"/>
    </ligand>
</feature>
<feature type="binding site" evidence="2">
    <location>
        <position position="149"/>
    </location>
    <ligand>
        <name>DNA</name>
        <dbReference type="ChEBI" id="CHEBI:16991"/>
    </ligand>
</feature>
<sequence>MPELPEVETTKTSLLPLLNQRVKSVQVRDSRLRWPIPEDISRLAGQRLTSLKRRSKYILAEFETDQMLWHLGMSGSFRVATAADELRKHDHLILTFDDGTELRYHDPRRFGCILWLNEESQSKLLNPLGPEPLSEDFNADYLYQKLKSKQVGIKIALMDNHVVVGVGNIYATESLFNLGIHPAQPASSLSKPQILALVQEIKRILKFAIELGGSTLRDYTNAMGENGYFQQTLLAYGRAGEMCVNCETPLENLKLGQRASVFCPQCQPLKRK</sequence>
<keyword id="KW-0227">DNA damage</keyword>
<keyword id="KW-0234">DNA repair</keyword>
<keyword id="KW-0238">DNA-binding</keyword>
<keyword id="KW-0326">Glycosidase</keyword>
<keyword id="KW-0378">Hydrolase</keyword>
<keyword id="KW-0456">Lyase</keyword>
<keyword id="KW-0479">Metal-binding</keyword>
<keyword id="KW-0511">Multifunctional enzyme</keyword>
<keyword id="KW-0862">Zinc</keyword>
<keyword id="KW-0863">Zinc-finger</keyword>
<proteinExistence type="inferred from homology"/>
<dbReference type="EC" id="3.2.2.23" evidence="2"/>
<dbReference type="EC" id="4.2.99.18" evidence="2"/>
<dbReference type="EMBL" id="CR543861">
    <property type="protein sequence ID" value="CAG67618.1"/>
    <property type="molecule type" value="Genomic_DNA"/>
</dbReference>
<dbReference type="RefSeq" id="WP_004922589.1">
    <property type="nucleotide sequence ID" value="NC_005966.1"/>
</dbReference>
<dbReference type="SMR" id="Q6FE90"/>
<dbReference type="STRING" id="202950.GCA_001485005_02468"/>
<dbReference type="GeneID" id="45233177"/>
<dbReference type="KEGG" id="aci:ACIAD0707"/>
<dbReference type="eggNOG" id="COG0266">
    <property type="taxonomic scope" value="Bacteria"/>
</dbReference>
<dbReference type="HOGENOM" id="CLU_038423_1_1_6"/>
<dbReference type="OrthoDB" id="9800855at2"/>
<dbReference type="BioCyc" id="ASP62977:ACIAD_RS03245-MONOMER"/>
<dbReference type="Proteomes" id="UP000000430">
    <property type="component" value="Chromosome"/>
</dbReference>
<dbReference type="GO" id="GO:0034039">
    <property type="term" value="F:8-oxo-7,8-dihydroguanine DNA N-glycosylase activity"/>
    <property type="evidence" value="ECO:0007669"/>
    <property type="project" value="TreeGrafter"/>
</dbReference>
<dbReference type="GO" id="GO:0140078">
    <property type="term" value="F:class I DNA-(apurinic or apyrimidinic site) endonuclease activity"/>
    <property type="evidence" value="ECO:0007669"/>
    <property type="project" value="UniProtKB-EC"/>
</dbReference>
<dbReference type="GO" id="GO:0003684">
    <property type="term" value="F:damaged DNA binding"/>
    <property type="evidence" value="ECO:0007669"/>
    <property type="project" value="InterPro"/>
</dbReference>
<dbReference type="GO" id="GO:0008270">
    <property type="term" value="F:zinc ion binding"/>
    <property type="evidence" value="ECO:0007669"/>
    <property type="project" value="UniProtKB-UniRule"/>
</dbReference>
<dbReference type="GO" id="GO:0006284">
    <property type="term" value="P:base-excision repair"/>
    <property type="evidence" value="ECO:0007669"/>
    <property type="project" value="InterPro"/>
</dbReference>
<dbReference type="CDD" id="cd08966">
    <property type="entry name" value="EcFpg-like_N"/>
    <property type="match status" value="1"/>
</dbReference>
<dbReference type="FunFam" id="1.10.8.50:FF:000003">
    <property type="entry name" value="Formamidopyrimidine-DNA glycosylase"/>
    <property type="match status" value="1"/>
</dbReference>
<dbReference type="FunFam" id="3.20.190.10:FF:000001">
    <property type="entry name" value="Formamidopyrimidine-DNA glycosylase"/>
    <property type="match status" value="1"/>
</dbReference>
<dbReference type="Gene3D" id="1.10.8.50">
    <property type="match status" value="1"/>
</dbReference>
<dbReference type="Gene3D" id="3.20.190.10">
    <property type="entry name" value="MutM-like, N-terminal"/>
    <property type="match status" value="1"/>
</dbReference>
<dbReference type="HAMAP" id="MF_00103">
    <property type="entry name" value="Fapy_DNA_glycosyl"/>
    <property type="match status" value="1"/>
</dbReference>
<dbReference type="InterPro" id="IPR015886">
    <property type="entry name" value="DNA_glyclase/AP_lyase_DNA-bd"/>
</dbReference>
<dbReference type="InterPro" id="IPR020629">
    <property type="entry name" value="Formamido-pyr_DNA_Glyclase"/>
</dbReference>
<dbReference type="InterPro" id="IPR012319">
    <property type="entry name" value="FPG_cat"/>
</dbReference>
<dbReference type="InterPro" id="IPR035937">
    <property type="entry name" value="MutM-like_N-ter"/>
</dbReference>
<dbReference type="InterPro" id="IPR010979">
    <property type="entry name" value="Ribosomal_uS13-like_H2TH"/>
</dbReference>
<dbReference type="InterPro" id="IPR000214">
    <property type="entry name" value="Znf_DNA_glyclase/AP_lyase"/>
</dbReference>
<dbReference type="InterPro" id="IPR010663">
    <property type="entry name" value="Znf_FPG/IleRS"/>
</dbReference>
<dbReference type="NCBIfam" id="TIGR00577">
    <property type="entry name" value="fpg"/>
    <property type="match status" value="1"/>
</dbReference>
<dbReference type="NCBIfam" id="NF002211">
    <property type="entry name" value="PRK01103.1"/>
    <property type="match status" value="1"/>
</dbReference>
<dbReference type="PANTHER" id="PTHR22993">
    <property type="entry name" value="FORMAMIDOPYRIMIDINE-DNA GLYCOSYLASE"/>
    <property type="match status" value="1"/>
</dbReference>
<dbReference type="PANTHER" id="PTHR22993:SF9">
    <property type="entry name" value="FORMAMIDOPYRIMIDINE-DNA GLYCOSYLASE"/>
    <property type="match status" value="1"/>
</dbReference>
<dbReference type="Pfam" id="PF01149">
    <property type="entry name" value="Fapy_DNA_glyco"/>
    <property type="match status" value="1"/>
</dbReference>
<dbReference type="Pfam" id="PF06831">
    <property type="entry name" value="H2TH"/>
    <property type="match status" value="1"/>
</dbReference>
<dbReference type="Pfam" id="PF06827">
    <property type="entry name" value="zf-FPG_IleRS"/>
    <property type="match status" value="1"/>
</dbReference>
<dbReference type="SMART" id="SM00898">
    <property type="entry name" value="Fapy_DNA_glyco"/>
    <property type="match status" value="1"/>
</dbReference>
<dbReference type="SMART" id="SM01232">
    <property type="entry name" value="H2TH"/>
    <property type="match status" value="1"/>
</dbReference>
<dbReference type="SUPFAM" id="SSF57716">
    <property type="entry name" value="Glucocorticoid receptor-like (DNA-binding domain)"/>
    <property type="match status" value="1"/>
</dbReference>
<dbReference type="SUPFAM" id="SSF81624">
    <property type="entry name" value="N-terminal domain of MutM-like DNA repair proteins"/>
    <property type="match status" value="1"/>
</dbReference>
<dbReference type="SUPFAM" id="SSF46946">
    <property type="entry name" value="S13-like H2TH domain"/>
    <property type="match status" value="1"/>
</dbReference>
<dbReference type="PROSITE" id="PS51068">
    <property type="entry name" value="FPG_CAT"/>
    <property type="match status" value="1"/>
</dbReference>
<dbReference type="PROSITE" id="PS51066">
    <property type="entry name" value="ZF_FPG_2"/>
    <property type="match status" value="1"/>
</dbReference>